<dbReference type="EC" id="6.2.1.48" evidence="1"/>
<dbReference type="EMBL" id="CP000038">
    <property type="protein sequence ID" value="AAZ86840.1"/>
    <property type="status" value="ALT_INIT"/>
    <property type="molecule type" value="Genomic_DNA"/>
</dbReference>
<dbReference type="RefSeq" id="WP_005139240.1">
    <property type="nucleotide sequence ID" value="NC_007384.1"/>
</dbReference>
<dbReference type="SMR" id="Q3Z5X2"/>
<dbReference type="GeneID" id="93777398"/>
<dbReference type="KEGG" id="ssn:SSON_0043"/>
<dbReference type="HOGENOM" id="CLU_000022_59_0_6"/>
<dbReference type="UniPathway" id="UPA00117"/>
<dbReference type="Proteomes" id="UP000002529">
    <property type="component" value="Chromosome"/>
</dbReference>
<dbReference type="GO" id="GO:0051108">
    <property type="term" value="F:carnitine-CoA ligase activity"/>
    <property type="evidence" value="ECO:0007669"/>
    <property type="project" value="InterPro"/>
</dbReference>
<dbReference type="GO" id="GO:0051109">
    <property type="term" value="F:crotonobetaine-CoA ligase activity"/>
    <property type="evidence" value="ECO:0007669"/>
    <property type="project" value="InterPro"/>
</dbReference>
<dbReference type="GO" id="GO:0031956">
    <property type="term" value="F:medium-chain fatty acid-CoA ligase activity"/>
    <property type="evidence" value="ECO:0007669"/>
    <property type="project" value="TreeGrafter"/>
</dbReference>
<dbReference type="GO" id="GO:0009437">
    <property type="term" value="P:carnitine metabolic process"/>
    <property type="evidence" value="ECO:0007669"/>
    <property type="project" value="UniProtKB-UniRule"/>
</dbReference>
<dbReference type="GO" id="GO:0006631">
    <property type="term" value="P:fatty acid metabolic process"/>
    <property type="evidence" value="ECO:0007669"/>
    <property type="project" value="TreeGrafter"/>
</dbReference>
<dbReference type="CDD" id="cd05934">
    <property type="entry name" value="FACL_DitJ_like"/>
    <property type="match status" value="1"/>
</dbReference>
<dbReference type="FunFam" id="3.30.300.30:FF:000011">
    <property type="entry name" value="Crotonobetaine/carnitine--CoA ligase"/>
    <property type="match status" value="1"/>
</dbReference>
<dbReference type="FunFam" id="3.40.50.12780:FF:000017">
    <property type="entry name" value="Crotonobetaine/carnitine--CoA ligase"/>
    <property type="match status" value="1"/>
</dbReference>
<dbReference type="Gene3D" id="3.30.300.30">
    <property type="match status" value="1"/>
</dbReference>
<dbReference type="Gene3D" id="3.40.50.12780">
    <property type="entry name" value="N-terminal domain of ligase-like"/>
    <property type="match status" value="1"/>
</dbReference>
<dbReference type="HAMAP" id="MF_01524">
    <property type="entry name" value="CaiC"/>
    <property type="match status" value="1"/>
</dbReference>
<dbReference type="InterPro" id="IPR025110">
    <property type="entry name" value="AMP-bd_C"/>
</dbReference>
<dbReference type="InterPro" id="IPR045851">
    <property type="entry name" value="AMP-bd_C_sf"/>
</dbReference>
<dbReference type="InterPro" id="IPR020845">
    <property type="entry name" value="AMP-binding_CS"/>
</dbReference>
<dbReference type="InterPro" id="IPR000873">
    <property type="entry name" value="AMP-dep_synth/lig_dom"/>
</dbReference>
<dbReference type="InterPro" id="IPR042099">
    <property type="entry name" value="ANL_N_sf"/>
</dbReference>
<dbReference type="InterPro" id="IPR023456">
    <property type="entry name" value="CaiC"/>
</dbReference>
<dbReference type="NCBIfam" id="NF005947">
    <property type="entry name" value="PRK08008.1"/>
    <property type="match status" value="1"/>
</dbReference>
<dbReference type="PANTHER" id="PTHR43201">
    <property type="entry name" value="ACYL-COA SYNTHETASE"/>
    <property type="match status" value="1"/>
</dbReference>
<dbReference type="PANTHER" id="PTHR43201:SF5">
    <property type="entry name" value="MEDIUM-CHAIN ACYL-COA LIGASE ACSF2, MITOCHONDRIAL"/>
    <property type="match status" value="1"/>
</dbReference>
<dbReference type="Pfam" id="PF00501">
    <property type="entry name" value="AMP-binding"/>
    <property type="match status" value="1"/>
</dbReference>
<dbReference type="Pfam" id="PF13193">
    <property type="entry name" value="AMP-binding_C"/>
    <property type="match status" value="1"/>
</dbReference>
<dbReference type="SUPFAM" id="SSF56801">
    <property type="entry name" value="Acetyl-CoA synthetase-like"/>
    <property type="match status" value="1"/>
</dbReference>
<dbReference type="PROSITE" id="PS00455">
    <property type="entry name" value="AMP_BINDING"/>
    <property type="match status" value="1"/>
</dbReference>
<organism>
    <name type="scientific">Shigella sonnei (strain Ss046)</name>
    <dbReference type="NCBI Taxonomy" id="300269"/>
    <lineage>
        <taxon>Bacteria</taxon>
        <taxon>Pseudomonadati</taxon>
        <taxon>Pseudomonadota</taxon>
        <taxon>Gammaproteobacteria</taxon>
        <taxon>Enterobacterales</taxon>
        <taxon>Enterobacteriaceae</taxon>
        <taxon>Shigella</taxon>
    </lineage>
</organism>
<name>CAIC_SHISS</name>
<protein>
    <recommendedName>
        <fullName evidence="1">Crotonobetaine/carnitine--CoA ligase</fullName>
        <ecNumber evidence="1">6.2.1.48</ecNumber>
    </recommendedName>
</protein>
<gene>
    <name evidence="1" type="primary">caiC</name>
    <name type="ordered locus">SSON_0043</name>
</gene>
<keyword id="KW-0436">Ligase</keyword>
<keyword id="KW-1185">Reference proteome</keyword>
<comment type="function">
    <text evidence="1">Catalyzes the transfer of CoA to carnitine, generating the initial carnitinyl-CoA needed for the CaiB reaction cycle. Also has activity toward crotonobetaine and gamma-butyrobetaine.</text>
</comment>
<comment type="catalytic activity">
    <reaction evidence="1">
        <text>4-(trimethylamino)butanoate + ATP + CoA = 4-(trimethylamino)butanoyl-CoA + AMP + diphosphate</text>
        <dbReference type="Rhea" id="RHEA:55960"/>
        <dbReference type="ChEBI" id="CHEBI:16244"/>
        <dbReference type="ChEBI" id="CHEBI:30616"/>
        <dbReference type="ChEBI" id="CHEBI:33019"/>
        <dbReference type="ChEBI" id="CHEBI:57287"/>
        <dbReference type="ChEBI" id="CHEBI:61513"/>
        <dbReference type="ChEBI" id="CHEBI:456215"/>
        <dbReference type="EC" id="6.2.1.48"/>
    </reaction>
</comment>
<comment type="catalytic activity">
    <reaction evidence="1">
        <text>crotonobetaine + ATP + CoA = crotonobetainyl-CoA + AMP + diphosphate</text>
        <dbReference type="Rhea" id="RHEA:30079"/>
        <dbReference type="ChEBI" id="CHEBI:17237"/>
        <dbReference type="ChEBI" id="CHEBI:30616"/>
        <dbReference type="ChEBI" id="CHEBI:33019"/>
        <dbReference type="ChEBI" id="CHEBI:57287"/>
        <dbReference type="ChEBI" id="CHEBI:60933"/>
        <dbReference type="ChEBI" id="CHEBI:456215"/>
        <dbReference type="EC" id="6.2.1.48"/>
    </reaction>
</comment>
<comment type="catalytic activity">
    <reaction evidence="1">
        <text>(R)-carnitine + ATP + CoA = (R)-carnitinyl-CoA + AMP + diphosphate</text>
        <dbReference type="Rhea" id="RHEA:28514"/>
        <dbReference type="ChEBI" id="CHEBI:16347"/>
        <dbReference type="ChEBI" id="CHEBI:30616"/>
        <dbReference type="ChEBI" id="CHEBI:33019"/>
        <dbReference type="ChEBI" id="CHEBI:57287"/>
        <dbReference type="ChEBI" id="CHEBI:60932"/>
        <dbReference type="ChEBI" id="CHEBI:456215"/>
        <dbReference type="EC" id="6.2.1.48"/>
    </reaction>
</comment>
<comment type="pathway">
    <text evidence="1">Amine and polyamine metabolism; carnitine metabolism.</text>
</comment>
<comment type="similarity">
    <text evidence="1">Belongs to the ATP-dependent AMP-binding enzyme family.</text>
</comment>
<comment type="sequence caution" evidence="2">
    <conflict type="erroneous initiation">
        <sequence resource="EMBL-CDS" id="AAZ86840"/>
    </conflict>
</comment>
<sequence>MDIIGGQHLRQMWDDLADVYGHKTALICESSGGVVNRYSYLELNQEINRTTNLFYTLGIRKGDKVALHLDNCPEFIFCWFGLAKIGAIMVPINARLLREESAWILQNSQACLLVTSAQFYPMYQQIQQEDATQLRHICLTDVALPADDGVSSFTQLKNQQPATLCYAPPLSTDDTAEILFTSGTTSRPKGVVITHYNLRFAGYYSAWQCALRDDDVYLTVMPAFHIDCQCTAAMAAFSAGATFVLVEKYSARAFWGQVQKYRATVTECIPMMIRTLMAQPPSANDRQHRLREVMFYLNLSEQEKDAFCERFGVRLLTSYGMTETIVGIIGDRPGDKRRWPSIGRAGFCYEAEIRDDHNRPLPAGEIGEICIKGVPGKTIFKEYFLNPKATAKVLEADGWLHTGDTGYCDEEGFFYFVDRRCNMIKRGGENVSCVELENIIATHPKIQDIVVVGIKDSIRDEAIKAFVVLNEGETLSEEEFFRFCEQNMAKFKVPSYLEIRKDLPRNCSGKIIRKNLK</sequence>
<accession>Q3Z5X2</accession>
<proteinExistence type="inferred from homology"/>
<evidence type="ECO:0000255" key="1">
    <source>
        <dbReference type="HAMAP-Rule" id="MF_01524"/>
    </source>
</evidence>
<evidence type="ECO:0000305" key="2"/>
<reference key="1">
    <citation type="journal article" date="2005" name="Nucleic Acids Res.">
        <title>Genome dynamics and diversity of Shigella species, the etiologic agents of bacillary dysentery.</title>
        <authorList>
            <person name="Yang F."/>
            <person name="Yang J."/>
            <person name="Zhang X."/>
            <person name="Chen L."/>
            <person name="Jiang Y."/>
            <person name="Yan Y."/>
            <person name="Tang X."/>
            <person name="Wang J."/>
            <person name="Xiong Z."/>
            <person name="Dong J."/>
            <person name="Xue Y."/>
            <person name="Zhu Y."/>
            <person name="Xu X."/>
            <person name="Sun L."/>
            <person name="Chen S."/>
            <person name="Nie H."/>
            <person name="Peng J."/>
            <person name="Xu J."/>
            <person name="Wang Y."/>
            <person name="Yuan Z."/>
            <person name="Wen Y."/>
            <person name="Yao Z."/>
            <person name="Shen Y."/>
            <person name="Qiang B."/>
            <person name="Hou Y."/>
            <person name="Yu J."/>
            <person name="Jin Q."/>
        </authorList>
    </citation>
    <scope>NUCLEOTIDE SEQUENCE [LARGE SCALE GENOMIC DNA]</scope>
    <source>
        <strain>Ss046</strain>
    </source>
</reference>
<feature type="chain" id="PRO_0000298683" description="Crotonobetaine/carnitine--CoA ligase">
    <location>
        <begin position="1"/>
        <end position="517"/>
    </location>
</feature>